<evidence type="ECO:0000255" key="1">
    <source>
        <dbReference type="HAMAP-Rule" id="MF_01869"/>
    </source>
</evidence>
<gene>
    <name evidence="1" type="primary">arnE</name>
    <name type="ordered locus">SEN2284</name>
</gene>
<dbReference type="EMBL" id="AM933172">
    <property type="protein sequence ID" value="CAR33868.1"/>
    <property type="molecule type" value="Genomic_DNA"/>
</dbReference>
<dbReference type="RefSeq" id="WP_000580579.1">
    <property type="nucleotide sequence ID" value="NC_011294.1"/>
</dbReference>
<dbReference type="SMR" id="B5R275"/>
<dbReference type="KEGG" id="set:SEN2284"/>
<dbReference type="HOGENOM" id="CLU_131462_5_1_6"/>
<dbReference type="UniPathway" id="UPA00030"/>
<dbReference type="Proteomes" id="UP000000613">
    <property type="component" value="Chromosome"/>
</dbReference>
<dbReference type="GO" id="GO:0005886">
    <property type="term" value="C:plasma membrane"/>
    <property type="evidence" value="ECO:0007669"/>
    <property type="project" value="UniProtKB-SubCell"/>
</dbReference>
<dbReference type="GO" id="GO:1901505">
    <property type="term" value="F:carbohydrate derivative transmembrane transporter activity"/>
    <property type="evidence" value="ECO:0007669"/>
    <property type="project" value="InterPro"/>
</dbReference>
<dbReference type="GO" id="GO:0009245">
    <property type="term" value="P:lipid A biosynthetic process"/>
    <property type="evidence" value="ECO:0007669"/>
    <property type="project" value="UniProtKB-UniRule"/>
</dbReference>
<dbReference type="GO" id="GO:0009103">
    <property type="term" value="P:lipopolysaccharide biosynthetic process"/>
    <property type="evidence" value="ECO:0007669"/>
    <property type="project" value="UniProtKB-UniRule"/>
</dbReference>
<dbReference type="FunFam" id="1.10.3730.20:FF:000002">
    <property type="entry name" value="Probable 4-amino-4-deoxy-L-arabinose-phosphoundecaprenol flippase subunit ArnE"/>
    <property type="match status" value="1"/>
</dbReference>
<dbReference type="Gene3D" id="1.10.3730.20">
    <property type="match status" value="1"/>
</dbReference>
<dbReference type="HAMAP" id="MF_01869">
    <property type="entry name" value="Flippase_ArnE"/>
    <property type="match status" value="1"/>
</dbReference>
<dbReference type="InterPro" id="IPR000620">
    <property type="entry name" value="EamA_dom"/>
</dbReference>
<dbReference type="InterPro" id="IPR022883">
    <property type="entry name" value="Flippase_ArnE"/>
</dbReference>
<dbReference type="InterPro" id="IPR000390">
    <property type="entry name" value="Small_drug/metabolite_transptr"/>
</dbReference>
<dbReference type="NCBIfam" id="NF011625">
    <property type="entry name" value="PRK15051.1"/>
    <property type="match status" value="1"/>
</dbReference>
<dbReference type="PANTHER" id="PTHR30561:SF23">
    <property type="entry name" value="4-AMINO-4-DEOXY-L-ARABINOSE-PHOSPHOUNDECAPRENOL FLIPPASE SUBUNIT ARNE-RELATED"/>
    <property type="match status" value="1"/>
</dbReference>
<dbReference type="PANTHER" id="PTHR30561">
    <property type="entry name" value="SMR FAMILY PROTON-DEPENDENT DRUG EFFLUX TRANSPORTER SUGE"/>
    <property type="match status" value="1"/>
</dbReference>
<dbReference type="Pfam" id="PF00892">
    <property type="entry name" value="EamA"/>
    <property type="match status" value="1"/>
</dbReference>
<dbReference type="SUPFAM" id="SSF103481">
    <property type="entry name" value="Multidrug resistance efflux transporter EmrE"/>
    <property type="match status" value="1"/>
</dbReference>
<reference key="1">
    <citation type="journal article" date="2008" name="Genome Res.">
        <title>Comparative genome analysis of Salmonella enteritidis PT4 and Salmonella gallinarum 287/91 provides insights into evolutionary and host adaptation pathways.</title>
        <authorList>
            <person name="Thomson N.R."/>
            <person name="Clayton D.J."/>
            <person name="Windhorst D."/>
            <person name="Vernikos G."/>
            <person name="Davidson S."/>
            <person name="Churcher C."/>
            <person name="Quail M.A."/>
            <person name="Stevens M."/>
            <person name="Jones M.A."/>
            <person name="Watson M."/>
            <person name="Barron A."/>
            <person name="Layton A."/>
            <person name="Pickard D."/>
            <person name="Kingsley R.A."/>
            <person name="Bignell A."/>
            <person name="Clark L."/>
            <person name="Harris B."/>
            <person name="Ormond D."/>
            <person name="Abdellah Z."/>
            <person name="Brooks K."/>
            <person name="Cherevach I."/>
            <person name="Chillingworth T."/>
            <person name="Woodward J."/>
            <person name="Norberczak H."/>
            <person name="Lord A."/>
            <person name="Arrowsmith C."/>
            <person name="Jagels K."/>
            <person name="Moule S."/>
            <person name="Mungall K."/>
            <person name="Saunders M."/>
            <person name="Whitehead S."/>
            <person name="Chabalgoity J.A."/>
            <person name="Maskell D."/>
            <person name="Humphreys T."/>
            <person name="Roberts M."/>
            <person name="Barrow P.A."/>
            <person name="Dougan G."/>
            <person name="Parkhill J."/>
        </authorList>
    </citation>
    <scope>NUCLEOTIDE SEQUENCE [LARGE SCALE GENOMIC DNA]</scope>
    <source>
        <strain>P125109</strain>
    </source>
</reference>
<keyword id="KW-0997">Cell inner membrane</keyword>
<keyword id="KW-1003">Cell membrane</keyword>
<keyword id="KW-0441">Lipid A biosynthesis</keyword>
<keyword id="KW-0444">Lipid biosynthesis</keyword>
<keyword id="KW-0443">Lipid metabolism</keyword>
<keyword id="KW-0448">Lipopolysaccharide biosynthesis</keyword>
<keyword id="KW-0472">Membrane</keyword>
<keyword id="KW-0812">Transmembrane</keyword>
<keyword id="KW-1133">Transmembrane helix</keyword>
<keyword id="KW-0813">Transport</keyword>
<accession>B5R275</accession>
<organism>
    <name type="scientific">Salmonella enteritidis PT4 (strain P125109)</name>
    <dbReference type="NCBI Taxonomy" id="550537"/>
    <lineage>
        <taxon>Bacteria</taxon>
        <taxon>Pseudomonadati</taxon>
        <taxon>Pseudomonadota</taxon>
        <taxon>Gammaproteobacteria</taxon>
        <taxon>Enterobacterales</taxon>
        <taxon>Enterobacteriaceae</taxon>
        <taxon>Salmonella</taxon>
    </lineage>
</organism>
<sequence>MIGVILVLASLLSVGGQLCQKQATRPLTVGGRRRHLMLWLGLALICMGAAMVLWLLVLQTLPVGIAYPMLSLNFVWVTLAAWKIWHEQVPPRHWFGVALIISGIIILGSAA</sequence>
<feature type="chain" id="PRO_0000382993" description="Probable 4-amino-4-deoxy-L-arabinose-phosphoundecaprenol flippase subunit ArnE">
    <location>
        <begin position="1"/>
        <end position="111"/>
    </location>
</feature>
<feature type="transmembrane region" description="Helical" evidence="1">
    <location>
        <begin position="38"/>
        <end position="58"/>
    </location>
</feature>
<feature type="transmembrane region" description="Helical" evidence="1">
    <location>
        <begin position="61"/>
        <end position="81"/>
    </location>
</feature>
<feature type="transmembrane region" description="Helical" evidence="1">
    <location>
        <begin position="91"/>
        <end position="111"/>
    </location>
</feature>
<feature type="domain" description="EamA" evidence="1">
    <location>
        <begin position="40"/>
        <end position="109"/>
    </location>
</feature>
<comment type="function">
    <text evidence="1">Translocates 4-amino-4-deoxy-L-arabinose-phosphoundecaprenol (alpha-L-Ara4N-phosphoundecaprenol) from the cytoplasmic to the periplasmic side of the inner membrane.</text>
</comment>
<comment type="pathway">
    <text evidence="1">Bacterial outer membrane biogenesis; lipopolysaccharide biosynthesis.</text>
</comment>
<comment type="subunit">
    <text evidence="1">Heterodimer of ArnE and ArnF.</text>
</comment>
<comment type="subcellular location">
    <subcellularLocation>
        <location evidence="1">Cell inner membrane</location>
        <topology evidence="1">Multi-pass membrane protein</topology>
    </subcellularLocation>
</comment>
<comment type="similarity">
    <text evidence="1">Belongs to the ArnE family.</text>
</comment>
<protein>
    <recommendedName>
        <fullName evidence="1">Probable 4-amino-4-deoxy-L-arabinose-phosphoundecaprenol flippase subunit ArnE</fullName>
        <shortName evidence="1">L-Ara4N-phosphoundecaprenol flippase subunit ArnE</shortName>
    </recommendedName>
    <alternativeName>
        <fullName evidence="1">Undecaprenyl phosphate-aminoarabinose flippase subunit ArnE</fullName>
    </alternativeName>
</protein>
<proteinExistence type="inferred from homology"/>
<name>ARNE_SALEP</name>